<gene>
    <name type="primary">CCT3</name>
    <name type="ORF">QtsA-10646</name>
</gene>
<feature type="chain" id="PRO_0000273199" description="T-complex protein 1 subunit gamma">
    <location>
        <begin position="1"/>
        <end position="545"/>
    </location>
</feature>
<feature type="region of interest" description="Disordered" evidence="4">
    <location>
        <begin position="1"/>
        <end position="24"/>
    </location>
</feature>
<feature type="region of interest" description="Disordered" evidence="4">
    <location>
        <begin position="526"/>
        <end position="545"/>
    </location>
</feature>
<feature type="binding site" evidence="2">
    <location>
        <position position="42"/>
    </location>
    <ligand>
        <name>ADP</name>
        <dbReference type="ChEBI" id="CHEBI:456216"/>
    </ligand>
</feature>
<feature type="binding site" evidence="2">
    <location>
        <position position="42"/>
    </location>
    <ligand>
        <name>ATP</name>
        <dbReference type="ChEBI" id="CHEBI:30616"/>
    </ligand>
</feature>
<feature type="binding site" evidence="2">
    <location>
        <position position="94"/>
    </location>
    <ligand>
        <name>ADP</name>
        <dbReference type="ChEBI" id="CHEBI:456216"/>
    </ligand>
</feature>
<feature type="binding site" evidence="2">
    <location>
        <position position="94"/>
    </location>
    <ligand>
        <name>ATP</name>
        <dbReference type="ChEBI" id="CHEBI:30616"/>
    </ligand>
</feature>
<feature type="binding site" evidence="2">
    <location>
        <position position="95"/>
    </location>
    <ligand>
        <name>ADP</name>
        <dbReference type="ChEBI" id="CHEBI:456216"/>
    </ligand>
</feature>
<feature type="binding site" evidence="2">
    <location>
        <position position="95"/>
    </location>
    <ligand>
        <name>ATP</name>
        <dbReference type="ChEBI" id="CHEBI:30616"/>
    </ligand>
</feature>
<feature type="binding site" evidence="2">
    <location>
        <position position="96"/>
    </location>
    <ligand>
        <name>ADP</name>
        <dbReference type="ChEBI" id="CHEBI:456216"/>
    </ligand>
</feature>
<feature type="binding site" evidence="2">
    <location>
        <position position="96"/>
    </location>
    <ligand>
        <name>ATP</name>
        <dbReference type="ChEBI" id="CHEBI:30616"/>
    </ligand>
</feature>
<feature type="binding site" evidence="2">
    <location>
        <position position="97"/>
    </location>
    <ligand>
        <name>ADP</name>
        <dbReference type="ChEBI" id="CHEBI:456216"/>
    </ligand>
</feature>
<feature type="binding site" evidence="2">
    <location>
        <position position="162"/>
    </location>
    <ligand>
        <name>ADP</name>
        <dbReference type="ChEBI" id="CHEBI:456216"/>
    </ligand>
</feature>
<feature type="binding site" evidence="2">
    <location>
        <position position="163"/>
    </location>
    <ligand>
        <name>ADP</name>
        <dbReference type="ChEBI" id="CHEBI:456216"/>
    </ligand>
</feature>
<feature type="binding site" evidence="2">
    <location>
        <position position="411"/>
    </location>
    <ligand>
        <name>ADP</name>
        <dbReference type="ChEBI" id="CHEBI:456216"/>
    </ligand>
</feature>
<feature type="binding site" evidence="2">
    <location>
        <position position="411"/>
    </location>
    <ligand>
        <name>ATP</name>
        <dbReference type="ChEBI" id="CHEBI:30616"/>
    </ligand>
</feature>
<feature type="binding site" evidence="2">
    <location>
        <position position="482"/>
    </location>
    <ligand>
        <name>ADP</name>
        <dbReference type="ChEBI" id="CHEBI:456216"/>
    </ligand>
</feature>
<feature type="binding site" evidence="2">
    <location>
        <position position="482"/>
    </location>
    <ligand>
        <name>ATP</name>
        <dbReference type="ChEBI" id="CHEBI:30616"/>
    </ligand>
</feature>
<feature type="binding site" evidence="2">
    <location>
        <position position="483"/>
    </location>
    <ligand>
        <name>ADP</name>
        <dbReference type="ChEBI" id="CHEBI:456216"/>
    </ligand>
</feature>
<feature type="binding site" evidence="2">
    <location>
        <position position="497"/>
    </location>
    <ligand>
        <name>ADP</name>
        <dbReference type="ChEBI" id="CHEBI:456216"/>
    </ligand>
</feature>
<feature type="binding site" evidence="2">
    <location>
        <position position="497"/>
    </location>
    <ligand>
        <name>ATP</name>
        <dbReference type="ChEBI" id="CHEBI:30616"/>
    </ligand>
</feature>
<feature type="binding site" evidence="2">
    <location>
        <position position="502"/>
    </location>
    <ligand>
        <name>ADP</name>
        <dbReference type="ChEBI" id="CHEBI:456216"/>
    </ligand>
</feature>
<feature type="modified residue" description="N-acetylmethionine" evidence="2">
    <location>
        <position position="1"/>
    </location>
</feature>
<feature type="modified residue" description="Phosphoserine" evidence="2">
    <location>
        <position position="11"/>
    </location>
</feature>
<feature type="modified residue" description="Phosphoserine" evidence="3">
    <location>
        <position position="170"/>
    </location>
</feature>
<feature type="modified residue" description="N6-acetyllysine" evidence="2">
    <location>
        <position position="222"/>
    </location>
</feature>
<feature type="modified residue" description="Phosphoserine" evidence="2">
    <location>
        <position position="243"/>
    </location>
</feature>
<feature type="modified residue" description="Phosphoserine" evidence="2">
    <location>
        <position position="244"/>
    </location>
</feature>
<feature type="modified residue" description="Phosphotyrosine" evidence="2">
    <location>
        <position position="247"/>
    </location>
</feature>
<feature type="modified residue" description="Phosphoserine" evidence="2">
    <location>
        <position position="252"/>
    </location>
</feature>
<feature type="modified residue" description="Phosphothreonine" evidence="2">
    <location>
        <position position="430"/>
    </location>
</feature>
<feature type="modified residue" description="Phosphothreonine" evidence="2">
    <location>
        <position position="459"/>
    </location>
</feature>
<feature type="disulfide bond" evidence="1">
    <location>
        <begin position="366"/>
        <end position="372"/>
    </location>
</feature>
<feature type="cross-link" description="Glycyl lysine isopeptide (Lys-Gly) (interchain with G-Cter in SUMO2)" evidence="2">
    <location>
        <position position="15"/>
    </location>
</feature>
<feature type="cross-link" description="Glycyl lysine isopeptide (Lys-Gly) (interchain with G-Cter in SUMO2)" evidence="2">
    <location>
        <position position="248"/>
    </location>
</feature>
<feature type="cross-link" description="Glycyl lysine isopeptide (Lys-Gly) (interchain with G-Cter in SUMO2)" evidence="2">
    <location>
        <position position="249"/>
    </location>
</feature>
<feature type="cross-link" description="Glycyl lysine isopeptide (Lys-Gly) (interchain with G-Cter in SUMO2)" evidence="2">
    <location>
        <position position="381"/>
    </location>
</feature>
<evidence type="ECO:0000250" key="1"/>
<evidence type="ECO:0000250" key="2">
    <source>
        <dbReference type="UniProtKB" id="P49368"/>
    </source>
</evidence>
<evidence type="ECO:0000250" key="3">
    <source>
        <dbReference type="UniProtKB" id="P80318"/>
    </source>
</evidence>
<evidence type="ECO:0000256" key="4">
    <source>
        <dbReference type="SAM" id="MobiDB-lite"/>
    </source>
</evidence>
<evidence type="ECO:0000305" key="5"/>
<dbReference type="EC" id="3.6.1.-" evidence="2"/>
<dbReference type="EMBL" id="AB168233">
    <property type="protein sequence ID" value="BAE00358.1"/>
    <property type="molecule type" value="mRNA"/>
</dbReference>
<dbReference type="SMR" id="Q4R963"/>
<dbReference type="STRING" id="9541.ENSMFAP00000020807"/>
<dbReference type="eggNOG" id="KOG0364">
    <property type="taxonomic scope" value="Eukaryota"/>
</dbReference>
<dbReference type="Proteomes" id="UP000233100">
    <property type="component" value="Unplaced"/>
</dbReference>
<dbReference type="GO" id="GO:0005832">
    <property type="term" value="C:chaperonin-containing T-complex"/>
    <property type="evidence" value="ECO:0000250"/>
    <property type="project" value="UniProtKB"/>
</dbReference>
<dbReference type="GO" id="GO:0005874">
    <property type="term" value="C:microtubule"/>
    <property type="evidence" value="ECO:0007669"/>
    <property type="project" value="UniProtKB-ARBA"/>
</dbReference>
<dbReference type="GO" id="GO:0005524">
    <property type="term" value="F:ATP binding"/>
    <property type="evidence" value="ECO:0007669"/>
    <property type="project" value="UniProtKB-KW"/>
</dbReference>
<dbReference type="GO" id="GO:0016887">
    <property type="term" value="F:ATP hydrolysis activity"/>
    <property type="evidence" value="ECO:0007669"/>
    <property type="project" value="InterPro"/>
</dbReference>
<dbReference type="GO" id="GO:0140662">
    <property type="term" value="F:ATP-dependent protein folding chaperone"/>
    <property type="evidence" value="ECO:0007669"/>
    <property type="project" value="InterPro"/>
</dbReference>
<dbReference type="GO" id="GO:0051082">
    <property type="term" value="F:unfolded protein binding"/>
    <property type="evidence" value="ECO:0007669"/>
    <property type="project" value="InterPro"/>
</dbReference>
<dbReference type="GO" id="GO:0032212">
    <property type="term" value="P:positive regulation of telomere maintenance via telomerase"/>
    <property type="evidence" value="ECO:0007669"/>
    <property type="project" value="UniProtKB-ARBA"/>
</dbReference>
<dbReference type="GO" id="GO:0050821">
    <property type="term" value="P:protein stabilization"/>
    <property type="evidence" value="ECO:0007669"/>
    <property type="project" value="UniProtKB-ARBA"/>
</dbReference>
<dbReference type="CDD" id="cd03337">
    <property type="entry name" value="TCP1_gamma"/>
    <property type="match status" value="1"/>
</dbReference>
<dbReference type="FunFam" id="1.10.560.10:FF:000069">
    <property type="entry name" value="T-complex protein 1 subunit gamma"/>
    <property type="match status" value="1"/>
</dbReference>
<dbReference type="FunFam" id="1.10.560.10:FF:000076">
    <property type="entry name" value="T-complex protein 1 subunit gamma"/>
    <property type="match status" value="1"/>
</dbReference>
<dbReference type="FunFam" id="3.50.7.10:FF:000005">
    <property type="entry name" value="T-complex protein 1 subunit gamma"/>
    <property type="match status" value="1"/>
</dbReference>
<dbReference type="Gene3D" id="3.50.7.10">
    <property type="entry name" value="GroEL"/>
    <property type="match status" value="1"/>
</dbReference>
<dbReference type="Gene3D" id="1.10.560.10">
    <property type="entry name" value="GroEL-like equatorial domain"/>
    <property type="match status" value="1"/>
</dbReference>
<dbReference type="Gene3D" id="3.30.260.10">
    <property type="entry name" value="TCP-1-like chaperonin intermediate domain"/>
    <property type="match status" value="1"/>
</dbReference>
<dbReference type="InterPro" id="IPR012719">
    <property type="entry name" value="Chap_CCT_gamma"/>
</dbReference>
<dbReference type="InterPro" id="IPR017998">
    <property type="entry name" value="Chaperone_TCP-1"/>
</dbReference>
<dbReference type="InterPro" id="IPR002194">
    <property type="entry name" value="Chaperonin_TCP-1_CS"/>
</dbReference>
<dbReference type="InterPro" id="IPR002423">
    <property type="entry name" value="Cpn60/GroEL/TCP-1"/>
</dbReference>
<dbReference type="InterPro" id="IPR027409">
    <property type="entry name" value="GroEL-like_apical_dom_sf"/>
</dbReference>
<dbReference type="InterPro" id="IPR027413">
    <property type="entry name" value="GROEL-like_equatorial_sf"/>
</dbReference>
<dbReference type="InterPro" id="IPR027410">
    <property type="entry name" value="TCP-1-like_intermed_sf"/>
</dbReference>
<dbReference type="InterPro" id="IPR053374">
    <property type="entry name" value="TCP-1_chaperonin"/>
</dbReference>
<dbReference type="InterPro" id="IPR054827">
    <property type="entry name" value="thermosome_alpha"/>
</dbReference>
<dbReference type="NCBIfam" id="TIGR02344">
    <property type="entry name" value="chap_CCT_gamma"/>
    <property type="match status" value="1"/>
</dbReference>
<dbReference type="NCBIfam" id="NF041082">
    <property type="entry name" value="thermosome_alpha"/>
    <property type="match status" value="1"/>
</dbReference>
<dbReference type="NCBIfam" id="NF041083">
    <property type="entry name" value="thermosome_beta"/>
    <property type="match status" value="1"/>
</dbReference>
<dbReference type="PANTHER" id="PTHR11353">
    <property type="entry name" value="CHAPERONIN"/>
    <property type="match status" value="1"/>
</dbReference>
<dbReference type="Pfam" id="PF00118">
    <property type="entry name" value="Cpn60_TCP1"/>
    <property type="match status" value="1"/>
</dbReference>
<dbReference type="PRINTS" id="PR00304">
    <property type="entry name" value="TCOMPLEXTCP1"/>
</dbReference>
<dbReference type="SUPFAM" id="SSF52029">
    <property type="entry name" value="GroEL apical domain-like"/>
    <property type="match status" value="1"/>
</dbReference>
<dbReference type="SUPFAM" id="SSF48592">
    <property type="entry name" value="GroEL equatorial domain-like"/>
    <property type="match status" value="1"/>
</dbReference>
<dbReference type="SUPFAM" id="SSF54849">
    <property type="entry name" value="GroEL-intermediate domain like"/>
    <property type="match status" value="1"/>
</dbReference>
<dbReference type="PROSITE" id="PS00750">
    <property type="entry name" value="TCP1_1"/>
    <property type="match status" value="1"/>
</dbReference>
<dbReference type="PROSITE" id="PS00751">
    <property type="entry name" value="TCP1_2"/>
    <property type="match status" value="1"/>
</dbReference>
<accession>Q4R963</accession>
<proteinExistence type="evidence at transcript level"/>
<keyword id="KW-0007">Acetylation</keyword>
<keyword id="KW-0067">ATP-binding</keyword>
<keyword id="KW-0143">Chaperone</keyword>
<keyword id="KW-0963">Cytoplasm</keyword>
<keyword id="KW-1015">Disulfide bond</keyword>
<keyword id="KW-0378">Hydrolase</keyword>
<keyword id="KW-1017">Isopeptide bond</keyword>
<keyword id="KW-0547">Nucleotide-binding</keyword>
<keyword id="KW-0597">Phosphoprotein</keyword>
<keyword id="KW-1185">Reference proteome</keyword>
<keyword id="KW-0832">Ubl conjugation</keyword>
<sequence length="545" mass="60427">MMGHRPVLVLSQNTKRESGRKVQSGNINAAKTIADIIRTCLGPKSMMKMLLDPMGGIVMTNDGNAILREIQVQHPAAKSMIEISRTQDEEVGGGTTSVIILAGEMLSVAEHFLEQQMHPTVVISAYRKALDDMISTLKKISIPVDINDSDMMLNIINSSITTKAISRWSSLACNIALDAVKTVQFEENGRKEIDIKKYAKVEKIPGGIIEDSCVLRGVMINKDVTHPRMRRYIKNPRIVLLDSSLEYKKGESQTDIEITREEDFTRILQMEEEYIQQLCEDIIQLKPDVVITEKGISDLAQHYLMRANITAIRRVRKTDNNRIARACGARIVSRPEELREDDVGTGAGLLEIKKIGDEYFTFITECKDPKACTILLRGASKEILSEVERNLQDAMQVCRNVLLDPQLVPGGGASEMAVAHALTEKSKAMTGVEQWPYRAVAQALEVIPRTLIQNCGASTIRLLTSLRAKHTQENCETWGVNGETGTLVDVKELGIWEPLAVKLQTYKTAVETAVLLLRIDDIVSGHKKKGDDQSRQGGAPDAGQE</sequence>
<reference key="1">
    <citation type="submission" date="2005-06" db="EMBL/GenBank/DDBJ databases">
        <title>DNA sequences of macaque genes expressed in brain or testis and its evolutionary implications.</title>
        <authorList>
            <consortium name="International consortium for macaque cDNA sequencing and analysis"/>
        </authorList>
    </citation>
    <scope>NUCLEOTIDE SEQUENCE [LARGE SCALE MRNA]</scope>
    <source>
        <tissue>Testis</tissue>
    </source>
</reference>
<organism>
    <name type="scientific">Macaca fascicularis</name>
    <name type="common">Crab-eating macaque</name>
    <name type="synonym">Cynomolgus monkey</name>
    <dbReference type="NCBI Taxonomy" id="9541"/>
    <lineage>
        <taxon>Eukaryota</taxon>
        <taxon>Metazoa</taxon>
        <taxon>Chordata</taxon>
        <taxon>Craniata</taxon>
        <taxon>Vertebrata</taxon>
        <taxon>Euteleostomi</taxon>
        <taxon>Mammalia</taxon>
        <taxon>Eutheria</taxon>
        <taxon>Euarchontoglires</taxon>
        <taxon>Primates</taxon>
        <taxon>Haplorrhini</taxon>
        <taxon>Catarrhini</taxon>
        <taxon>Cercopithecidae</taxon>
        <taxon>Cercopithecinae</taxon>
        <taxon>Macaca</taxon>
    </lineage>
</organism>
<name>TCPG_MACFA</name>
<protein>
    <recommendedName>
        <fullName>T-complex protein 1 subunit gamma</fullName>
        <shortName>TCP-1-gamma</shortName>
        <ecNumber evidence="2">3.6.1.-</ecNumber>
    </recommendedName>
    <alternativeName>
        <fullName>CCT-gamma</fullName>
    </alternativeName>
</protein>
<comment type="function">
    <text evidence="2">Component of the chaperonin-containing T-complex (TRiC), a molecular chaperone complex that assists the folding of actin, tubulin and other proteins upon ATP hydrolysis. The TRiC complex mediates the folding of WRAP53/TCAB1, thereby regulating telomere maintenance. As part of the TRiC complex may play a role in the assembly of BBSome, a complex involved in ciliogenesis regulating transports vesicles to the cilia.</text>
</comment>
<comment type="catalytic activity">
    <reaction evidence="2">
        <text>ATP + H2O = ADP + phosphate + H(+)</text>
        <dbReference type="Rhea" id="RHEA:13065"/>
        <dbReference type="ChEBI" id="CHEBI:15377"/>
        <dbReference type="ChEBI" id="CHEBI:15378"/>
        <dbReference type="ChEBI" id="CHEBI:30616"/>
        <dbReference type="ChEBI" id="CHEBI:43474"/>
        <dbReference type="ChEBI" id="CHEBI:456216"/>
    </reaction>
</comment>
<comment type="subunit">
    <text evidence="2 3">Component of the chaperonin-containing T-complex (TRiC), a hexadecamer composed of two identical back-to-back stacked rings enclosing a protein folding chamber. Each ring is made up of eight different subunits: TCP1/CCT1, CCT2, CCT3, CCT4, CCT5, CCT6A/CCT6, CCT7, CCT8. Interacts with PACRG (By similarity). Interacts with DNAAF4 (By similarity). Interacts with DLEC1 (By similarity).</text>
</comment>
<comment type="subcellular location">
    <subcellularLocation>
        <location evidence="5">Cytoplasm</location>
    </subcellularLocation>
</comment>
<comment type="similarity">
    <text evidence="5">Belongs to the TCP-1 chaperonin family.</text>
</comment>